<reference key="1">
    <citation type="journal article" date="2007" name="Genome Res.">
        <title>Reductive evolution and niche adaptation inferred from the genome of Mycobacterium ulcerans, the causative agent of Buruli ulcer.</title>
        <authorList>
            <person name="Stinear T.P."/>
            <person name="Seemann T."/>
            <person name="Pidot S."/>
            <person name="Frigui W."/>
            <person name="Reysset G."/>
            <person name="Garnier T."/>
            <person name="Meurice G."/>
            <person name="Simon D."/>
            <person name="Bouchier C."/>
            <person name="Ma L."/>
            <person name="Tichit M."/>
            <person name="Porter J.L."/>
            <person name="Ryan J."/>
            <person name="Johnson P.D.R."/>
            <person name="Davies J.K."/>
            <person name="Jenkin G.A."/>
            <person name="Small P.L.C."/>
            <person name="Jones L.M."/>
            <person name="Tekaia F."/>
            <person name="Laval F."/>
            <person name="Daffe M."/>
            <person name="Parkhill J."/>
            <person name="Cole S.T."/>
        </authorList>
    </citation>
    <scope>NUCLEOTIDE SEQUENCE [LARGE SCALE GENOMIC DNA]</scope>
    <source>
        <strain>Agy99</strain>
    </source>
</reference>
<organism>
    <name type="scientific">Mycobacterium ulcerans (strain Agy99)</name>
    <dbReference type="NCBI Taxonomy" id="362242"/>
    <lineage>
        <taxon>Bacteria</taxon>
        <taxon>Bacillati</taxon>
        <taxon>Actinomycetota</taxon>
        <taxon>Actinomycetes</taxon>
        <taxon>Mycobacteriales</taxon>
        <taxon>Mycobacteriaceae</taxon>
        <taxon>Mycobacterium</taxon>
        <taxon>Mycobacterium ulcerans group</taxon>
    </lineage>
</organism>
<feature type="chain" id="PRO_0000368897" description="ATP synthase subunit b-delta">
    <location>
        <begin position="1"/>
        <end position="445"/>
    </location>
</feature>
<feature type="transmembrane region" description="Helical" evidence="2">
    <location>
        <begin position="4"/>
        <end position="24"/>
    </location>
</feature>
<feature type="region of interest" description="ATP synthase subunit b">
    <location>
        <begin position="1"/>
        <end position="168"/>
    </location>
</feature>
<feature type="region of interest" description="ATP synthase subunit delta">
    <location>
        <begin position="169"/>
        <end position="445"/>
    </location>
</feature>
<accession>A0PUK3</accession>
<name>ATPFD_MYCUA</name>
<comment type="function">
    <text evidence="1">F(1)F(0) ATP synthase produces ATP from ADP in the presence of a proton or sodium gradient. F-type ATPases consist of two structural domains, F(1) containing the extramembraneous catalytic core and F(0) containing the membrane proton channel, linked together by a central stalk and a peripheral stalk. During catalysis, ATP synthesis in the catalytic domain of F(1) is coupled via a rotary mechanism of the central stalk subunits to proton translocation (By similarity).</text>
</comment>
<comment type="function">
    <text evidence="1">This fusion protein includes a component of the F(0) channel (subunit b) and of the F(1) subunit (subunit delta). Two copies of subunit b and one of delta together form the peripheral 'stator' stalk which links F(1) to F(0) (By similarity).</text>
</comment>
<comment type="subunit">
    <text evidence="1">F-type ATPases have 2 components, F(1) - the catalytic core - and F(0) - the membrane proton channel. F(1) has five subunits: alpha(3), beta(3), gamma(1), delta(1), epsilon(1). F(0) has three main subunits: a(1), b(2) and c(10-14). The alpha and beta chains form an alternating ring which encloses part of the gamma chain. F(1) is attached to F(0) by a central stalk formed by the gamma and epsilon chains, while a peripheral stalk is formed by the delta and b chains (By similarity).</text>
</comment>
<comment type="subcellular location">
    <subcellularLocation>
        <location evidence="1">Cell membrane</location>
        <topology evidence="1">Single-pass membrane protein</topology>
    </subcellularLocation>
</comment>
<comment type="similarity">
    <text evidence="3">In the N-terminal section; belongs to the ATPase B chain family.</text>
</comment>
<comment type="similarity">
    <text evidence="3">In the C-terminal section; belongs to the ATPase delta chain family.</text>
</comment>
<evidence type="ECO:0000250" key="1"/>
<evidence type="ECO:0000255" key="2"/>
<evidence type="ECO:0000305" key="3"/>
<gene>
    <name type="primary">atpFH</name>
    <name type="synonym">atpF</name>
    <name type="synonym">atpH</name>
    <name type="ordered locus">MUL_3957</name>
</gene>
<protein>
    <recommendedName>
        <fullName>ATP synthase subunit b-delta</fullName>
    </recommendedName>
    <domain>
        <recommendedName>
            <fullName>ATP synthase subunit b</fullName>
        </recommendedName>
        <alternativeName>
            <fullName>ATP synthase F(0) sector subunit b 2</fullName>
        </alternativeName>
        <alternativeName>
            <fullName>ATPase subunit I 2</fullName>
        </alternativeName>
        <alternativeName>
            <fullName>F-type ATPase subunit b 2</fullName>
            <shortName>F-ATPase subunit b 2</shortName>
        </alternativeName>
    </domain>
    <domain>
        <recommendedName>
            <fullName>ATP synthase subunit delta</fullName>
        </recommendedName>
        <alternativeName>
            <fullName>ATP synthase F(1) sector subunit delta</fullName>
        </alternativeName>
        <alternativeName>
            <fullName>F-type ATPase subunit delta</fullName>
            <shortName>F-ATPase subunit delta</shortName>
        </alternativeName>
    </domain>
</protein>
<sequence length="445" mass="47827">MSTFIGQLVGFAAIVFLVWRYVVPPVRRMMAARQDTVRQQLADAATAAVRLTESTTAHSKAVEAAKAEAEQVVAEAKEEAKRITAQMQTQAGVEAERIKVQGSRQVELLRTQLTRQLRLELGHESVRQASELVRNHVSDPGQQAATVDRFLDELDAMAPAAAEVERPVAAKMRSASRRALGSLVDKFAGLAKGLDNAALSALASGLVSVAQLLQREVIVTRYLTVPAEDAAPRIRLLERLISGQVGNPALDILRAAVTERWSASSDLIDAIEHVSRQALLEVAQRDGQVDEVEDQLFRFSRILDAQPRLSILLGDYVVPAEGRVGLLRKVLDSAGSVNPIAVALLSQTVELLRGQPAEEAALLLAEVAVARRGEVVAQVSAAAELSDAQRTRVTEVLSRIYGHPVTVQLQTDPTLLGGLSIAVGDEVIDGTLSSRLTAAEAQLPD</sequence>
<keyword id="KW-0066">ATP synthesis</keyword>
<keyword id="KW-1003">Cell membrane</keyword>
<keyword id="KW-0138">CF(0)</keyword>
<keyword id="KW-0375">Hydrogen ion transport</keyword>
<keyword id="KW-0406">Ion transport</keyword>
<keyword id="KW-0472">Membrane</keyword>
<keyword id="KW-0511">Multifunctional enzyme</keyword>
<keyword id="KW-0812">Transmembrane</keyword>
<keyword id="KW-1133">Transmembrane helix</keyword>
<keyword id="KW-0813">Transport</keyword>
<proteinExistence type="inferred from homology"/>
<dbReference type="EMBL" id="CP000325">
    <property type="protein sequence ID" value="ABL06022.1"/>
    <property type="molecule type" value="Genomic_DNA"/>
</dbReference>
<dbReference type="RefSeq" id="WP_011741627.1">
    <property type="nucleotide sequence ID" value="NC_008611.1"/>
</dbReference>
<dbReference type="SMR" id="A0PUK3"/>
<dbReference type="KEGG" id="mul:MUL_3957"/>
<dbReference type="eggNOG" id="COG0711">
    <property type="taxonomic scope" value="Bacteria"/>
</dbReference>
<dbReference type="eggNOG" id="COG0712">
    <property type="taxonomic scope" value="Bacteria"/>
</dbReference>
<dbReference type="HOGENOM" id="CLU_722652_0_0_11"/>
<dbReference type="Proteomes" id="UP000000765">
    <property type="component" value="Chromosome"/>
</dbReference>
<dbReference type="GO" id="GO:0005886">
    <property type="term" value="C:plasma membrane"/>
    <property type="evidence" value="ECO:0007669"/>
    <property type="project" value="UniProtKB-SubCell"/>
</dbReference>
<dbReference type="GO" id="GO:0045259">
    <property type="term" value="C:proton-transporting ATP synthase complex"/>
    <property type="evidence" value="ECO:0007669"/>
    <property type="project" value="UniProtKB-KW"/>
</dbReference>
<dbReference type="GO" id="GO:0046933">
    <property type="term" value="F:proton-transporting ATP synthase activity, rotational mechanism"/>
    <property type="evidence" value="ECO:0007669"/>
    <property type="project" value="UniProtKB-UniRule"/>
</dbReference>
<dbReference type="CDD" id="cd06503">
    <property type="entry name" value="ATP-synt_Fo_b"/>
    <property type="match status" value="1"/>
</dbReference>
<dbReference type="Gene3D" id="1.20.5.620">
    <property type="entry name" value="F1F0 ATP synthase subunit B, membrane domain"/>
    <property type="match status" value="1"/>
</dbReference>
<dbReference type="Gene3D" id="1.10.520.20">
    <property type="entry name" value="N-terminal domain of the delta subunit of the F1F0-ATP synthase"/>
    <property type="match status" value="1"/>
</dbReference>
<dbReference type="HAMAP" id="MF_01398">
    <property type="entry name" value="ATP_synth_b_bprime"/>
    <property type="match status" value="1"/>
</dbReference>
<dbReference type="HAMAP" id="MF_01416">
    <property type="entry name" value="ATP_synth_delta_bact"/>
    <property type="match status" value="1"/>
</dbReference>
<dbReference type="InterPro" id="IPR028987">
    <property type="entry name" value="ATP_synth_B-like_membr_sf"/>
</dbReference>
<dbReference type="InterPro" id="IPR002146">
    <property type="entry name" value="ATP_synth_b/b'su_bac/chlpt"/>
</dbReference>
<dbReference type="InterPro" id="IPR005864">
    <property type="entry name" value="ATP_synth_F0_bsu_bac"/>
</dbReference>
<dbReference type="InterPro" id="IPR026015">
    <property type="entry name" value="ATP_synth_OSCP/delta_N_sf"/>
</dbReference>
<dbReference type="InterPro" id="IPR000711">
    <property type="entry name" value="ATPase_OSCP/dsu"/>
</dbReference>
<dbReference type="NCBIfam" id="TIGR01144">
    <property type="entry name" value="ATP_synt_b"/>
    <property type="match status" value="1"/>
</dbReference>
<dbReference type="NCBIfam" id="NF009961">
    <property type="entry name" value="PRK13428.1"/>
    <property type="match status" value="1"/>
</dbReference>
<dbReference type="NCBIfam" id="NF009967">
    <property type="entry name" value="PRK13430.1"/>
    <property type="match status" value="1"/>
</dbReference>
<dbReference type="PANTHER" id="PTHR11910">
    <property type="entry name" value="ATP SYNTHASE DELTA CHAIN"/>
    <property type="match status" value="1"/>
</dbReference>
<dbReference type="Pfam" id="PF00430">
    <property type="entry name" value="ATP-synt_B"/>
    <property type="match status" value="1"/>
</dbReference>
<dbReference type="Pfam" id="PF00213">
    <property type="entry name" value="OSCP"/>
    <property type="match status" value="1"/>
</dbReference>
<dbReference type="PRINTS" id="PR00125">
    <property type="entry name" value="ATPASEDELTA"/>
</dbReference>
<dbReference type="SUPFAM" id="SSF81573">
    <property type="entry name" value="F1F0 ATP synthase subunit B, membrane domain"/>
    <property type="match status" value="1"/>
</dbReference>
<dbReference type="SUPFAM" id="SSF47928">
    <property type="entry name" value="N-terminal domain of the delta subunit of the F1F0-ATP synthase"/>
    <property type="match status" value="1"/>
</dbReference>